<name>Y3539_PSEAE</name>
<dbReference type="EMBL" id="AE004091">
    <property type="protein sequence ID" value="AAG06927.1"/>
    <property type="molecule type" value="Genomic_DNA"/>
</dbReference>
<dbReference type="PIR" id="G83203">
    <property type="entry name" value="G83203"/>
</dbReference>
<dbReference type="RefSeq" id="NP_252229.1">
    <property type="nucleotide sequence ID" value="NC_002516.2"/>
</dbReference>
<dbReference type="SMR" id="Q9HY72"/>
<dbReference type="FunCoup" id="Q9HY72">
    <property type="interactions" value="86"/>
</dbReference>
<dbReference type="STRING" id="208964.PA3539"/>
<dbReference type="PaxDb" id="208964-PA3539"/>
<dbReference type="GeneID" id="879009"/>
<dbReference type="KEGG" id="pae:PA3539"/>
<dbReference type="PATRIC" id="fig|208964.12.peg.3703"/>
<dbReference type="PseudoCAP" id="PA3539"/>
<dbReference type="HOGENOM" id="CLU_061989_0_0_6"/>
<dbReference type="InParanoid" id="Q9HY72"/>
<dbReference type="OrthoDB" id="9777133at2"/>
<dbReference type="PhylomeDB" id="Q9HY72"/>
<dbReference type="BioCyc" id="PAER208964:G1FZ6-3607-MONOMER"/>
<dbReference type="Proteomes" id="UP000002438">
    <property type="component" value="Chromosome"/>
</dbReference>
<dbReference type="GO" id="GO:0005829">
    <property type="term" value="C:cytosol"/>
    <property type="evidence" value="ECO:0000318"/>
    <property type="project" value="GO_Central"/>
</dbReference>
<dbReference type="GO" id="GO:0033194">
    <property type="term" value="P:response to hydroperoxide"/>
    <property type="evidence" value="ECO:0000318"/>
    <property type="project" value="GO_Central"/>
</dbReference>
<dbReference type="HAMAP" id="MF_00652">
    <property type="entry name" value="UPF0246"/>
    <property type="match status" value="1"/>
</dbReference>
<dbReference type="InterPro" id="IPR005583">
    <property type="entry name" value="YaaA"/>
</dbReference>
<dbReference type="NCBIfam" id="NF002541">
    <property type="entry name" value="PRK02101.1-1"/>
    <property type="match status" value="1"/>
</dbReference>
<dbReference type="NCBIfam" id="NF002542">
    <property type="entry name" value="PRK02101.1-3"/>
    <property type="match status" value="1"/>
</dbReference>
<dbReference type="PANTHER" id="PTHR30283:SF4">
    <property type="entry name" value="PEROXIDE STRESS RESISTANCE PROTEIN YAAA"/>
    <property type="match status" value="1"/>
</dbReference>
<dbReference type="PANTHER" id="PTHR30283">
    <property type="entry name" value="PEROXIDE STRESS RESPONSE PROTEIN YAAA"/>
    <property type="match status" value="1"/>
</dbReference>
<dbReference type="Pfam" id="PF03883">
    <property type="entry name" value="H2O2_YaaD"/>
    <property type="match status" value="1"/>
</dbReference>
<comment type="similarity">
    <text evidence="1">Belongs to the UPF0246 family.</text>
</comment>
<proteinExistence type="inferred from homology"/>
<accession>Q9HY72</accession>
<organism>
    <name type="scientific">Pseudomonas aeruginosa (strain ATCC 15692 / DSM 22644 / CIP 104116 / JCM 14847 / LMG 12228 / 1C / PRS 101 / PAO1)</name>
    <dbReference type="NCBI Taxonomy" id="208964"/>
    <lineage>
        <taxon>Bacteria</taxon>
        <taxon>Pseudomonadati</taxon>
        <taxon>Pseudomonadota</taxon>
        <taxon>Gammaproteobacteria</taxon>
        <taxon>Pseudomonadales</taxon>
        <taxon>Pseudomonadaceae</taxon>
        <taxon>Pseudomonas</taxon>
    </lineage>
</organism>
<reference key="1">
    <citation type="journal article" date="2000" name="Nature">
        <title>Complete genome sequence of Pseudomonas aeruginosa PAO1, an opportunistic pathogen.</title>
        <authorList>
            <person name="Stover C.K."/>
            <person name="Pham X.-Q.T."/>
            <person name="Erwin A.L."/>
            <person name="Mizoguchi S.D."/>
            <person name="Warrener P."/>
            <person name="Hickey M.J."/>
            <person name="Brinkman F.S.L."/>
            <person name="Hufnagle W.O."/>
            <person name="Kowalik D.J."/>
            <person name="Lagrou M."/>
            <person name="Garber R.L."/>
            <person name="Goltry L."/>
            <person name="Tolentino E."/>
            <person name="Westbrock-Wadman S."/>
            <person name="Yuan Y."/>
            <person name="Brody L.L."/>
            <person name="Coulter S.N."/>
            <person name="Folger K.R."/>
            <person name="Kas A."/>
            <person name="Larbig K."/>
            <person name="Lim R.M."/>
            <person name="Smith K.A."/>
            <person name="Spencer D.H."/>
            <person name="Wong G.K.-S."/>
            <person name="Wu Z."/>
            <person name="Paulsen I.T."/>
            <person name="Reizer J."/>
            <person name="Saier M.H. Jr."/>
            <person name="Hancock R.E.W."/>
            <person name="Lory S."/>
            <person name="Olson M.V."/>
        </authorList>
    </citation>
    <scope>NUCLEOTIDE SEQUENCE [LARGE SCALE GENOMIC DNA]</scope>
    <source>
        <strain>ATCC 15692 / DSM 22644 / CIP 104116 / JCM 14847 / LMG 12228 / 1C / PRS 101 / PAO1</strain>
    </source>
</reference>
<protein>
    <recommendedName>
        <fullName evidence="1">UPF0246 protein PA3539</fullName>
    </recommendedName>
</protein>
<keyword id="KW-1185">Reference proteome</keyword>
<evidence type="ECO:0000255" key="1">
    <source>
        <dbReference type="HAMAP-Rule" id="MF_00652"/>
    </source>
</evidence>
<gene>
    <name type="ordered locus">PA3539</name>
</gene>
<sequence length="259" mass="29561">MLMVISPAKTLDYETPPVTHRFTQPQYLDHAQELIQQLRQLTPLQISELMKLSDKLAGLNAARYASWHPEFTPENAKQALLAFKGDVYTGLNAEDFGEDDFAFAQDHLRMLSGLYGVLRPLDLMQPYRLEMGTRLANARGKDLYAFWGERISQWLNEALAAQGDDVLLNLASNEYFGAVKRKALQARVIDTEFKDLKNGQYKIISFYAKKARGMMARYVIRERLRDPAGLKDFNAHGYYFSAEQSGPDQLVFLRDAPQD</sequence>
<feature type="chain" id="PRO_0000203995" description="UPF0246 protein PA3539">
    <location>
        <begin position="1"/>
        <end position="259"/>
    </location>
</feature>